<feature type="chain" id="PRO_0000094174" description="CDP-archaeol synthase">
    <location>
        <begin position="1"/>
        <end position="168"/>
    </location>
</feature>
<feature type="transmembrane region" description="Helical" evidence="1">
    <location>
        <begin position="4"/>
        <end position="24"/>
    </location>
</feature>
<feature type="transmembrane region" description="Helical" evidence="1">
    <location>
        <begin position="51"/>
        <end position="71"/>
    </location>
</feature>
<feature type="transmembrane region" description="Helical" evidence="1">
    <location>
        <begin position="81"/>
        <end position="101"/>
    </location>
</feature>
<feature type="transmembrane region" description="Helical" evidence="1">
    <location>
        <begin position="112"/>
        <end position="132"/>
    </location>
</feature>
<feature type="transmembrane region" description="Helical" evidence="1">
    <location>
        <begin position="138"/>
        <end position="158"/>
    </location>
</feature>
<proteinExistence type="inferred from homology"/>
<organism>
    <name type="scientific">Pyrococcus abyssi (strain GE5 / Orsay)</name>
    <dbReference type="NCBI Taxonomy" id="272844"/>
    <lineage>
        <taxon>Archaea</taxon>
        <taxon>Methanobacteriati</taxon>
        <taxon>Methanobacteriota</taxon>
        <taxon>Thermococci</taxon>
        <taxon>Thermococcales</taxon>
        <taxon>Thermococcaceae</taxon>
        <taxon>Pyrococcus</taxon>
    </lineage>
</organism>
<keyword id="KW-1003">Cell membrane</keyword>
<keyword id="KW-0444">Lipid biosynthesis</keyword>
<keyword id="KW-0443">Lipid metabolism</keyword>
<keyword id="KW-0460">Magnesium</keyword>
<keyword id="KW-0472">Membrane</keyword>
<keyword id="KW-0594">Phospholipid biosynthesis</keyword>
<keyword id="KW-1208">Phospholipid metabolism</keyword>
<keyword id="KW-0808">Transferase</keyword>
<keyword id="KW-0812">Transmembrane</keyword>
<keyword id="KW-1133">Transmembrane helix</keyword>
<gene>
    <name evidence="1" type="primary">carS</name>
    <name type="ordered locus">PYRAB16220</name>
    <name type="ORF">PAB1285</name>
</gene>
<evidence type="ECO:0000255" key="1">
    <source>
        <dbReference type="HAMAP-Rule" id="MF_01117"/>
    </source>
</evidence>
<evidence type="ECO:0000305" key="2"/>
<name>CDPAS_PYRAB</name>
<dbReference type="EC" id="2.7.7.67" evidence="1"/>
<dbReference type="EMBL" id="AJ248288">
    <property type="protein sequence ID" value="CAB50526.1"/>
    <property type="status" value="ALT_INIT"/>
    <property type="molecule type" value="Genomic_DNA"/>
</dbReference>
<dbReference type="EMBL" id="HE613800">
    <property type="protein sequence ID" value="CCE71083.1"/>
    <property type="molecule type" value="Genomic_DNA"/>
</dbReference>
<dbReference type="PIR" id="H75010">
    <property type="entry name" value="H75010"/>
</dbReference>
<dbReference type="RefSeq" id="WP_048147117.1">
    <property type="nucleotide sequence ID" value="NC_000868.1"/>
</dbReference>
<dbReference type="SMR" id="Q9UY86"/>
<dbReference type="STRING" id="272844.PAB1285"/>
<dbReference type="KEGG" id="pab:PAB1285"/>
<dbReference type="PATRIC" id="fig|272844.11.peg.1732"/>
<dbReference type="eggNOG" id="arCOG04106">
    <property type="taxonomic scope" value="Archaea"/>
</dbReference>
<dbReference type="HOGENOM" id="CLU_105710_0_0_2"/>
<dbReference type="OrthoDB" id="45383at2157"/>
<dbReference type="UniPathway" id="UPA00940"/>
<dbReference type="Proteomes" id="UP000000810">
    <property type="component" value="Chromosome"/>
</dbReference>
<dbReference type="Proteomes" id="UP000009139">
    <property type="component" value="Chromosome"/>
</dbReference>
<dbReference type="GO" id="GO:0005886">
    <property type="term" value="C:plasma membrane"/>
    <property type="evidence" value="ECO:0007669"/>
    <property type="project" value="UniProtKB-SubCell"/>
</dbReference>
<dbReference type="GO" id="GO:0043338">
    <property type="term" value="F:CDP-2,3-bis-(O-geranylgeranyl)-sn-glycerol synthase activity"/>
    <property type="evidence" value="ECO:0007669"/>
    <property type="project" value="UniProtKB-EC"/>
</dbReference>
<dbReference type="GO" id="GO:0046474">
    <property type="term" value="P:glycerophospholipid biosynthetic process"/>
    <property type="evidence" value="ECO:0007669"/>
    <property type="project" value="UniProtKB-UniRule"/>
</dbReference>
<dbReference type="HAMAP" id="MF_01117">
    <property type="entry name" value="CDP_archaeol_synth"/>
    <property type="match status" value="1"/>
</dbReference>
<dbReference type="InterPro" id="IPR032690">
    <property type="entry name" value="CarS"/>
</dbReference>
<dbReference type="InterPro" id="IPR002726">
    <property type="entry name" value="CarS_archaea"/>
</dbReference>
<dbReference type="NCBIfam" id="NF003114">
    <property type="entry name" value="PRK04032.1"/>
    <property type="match status" value="1"/>
</dbReference>
<dbReference type="PANTHER" id="PTHR39650">
    <property type="entry name" value="CDP-ARCHAEOL SYNTHASE"/>
    <property type="match status" value="1"/>
</dbReference>
<dbReference type="PANTHER" id="PTHR39650:SF1">
    <property type="entry name" value="CDP-ARCHAEOL SYNTHASE"/>
    <property type="match status" value="1"/>
</dbReference>
<dbReference type="Pfam" id="PF01864">
    <property type="entry name" value="CarS-like"/>
    <property type="match status" value="1"/>
</dbReference>
<sequence length="168" mass="18708">MNPIFEAFWYILPAYFANSSPVVLGGGTPIDFGKKWRDGRRIFGDGKTWRGFFGGITVGTVVGTIQHLMFPGYYGSLKLAVGVAFLLSLGALVGDLIGSFIKRRLNMPRGYPAVGLDQWGFLISALCFAYPLRTIPTGEVLFLLVVTPVIHWLANVFAYRMKWKNVPW</sequence>
<comment type="function">
    <text evidence="1">Catalyzes the formation of CDP-2,3-bis-(O-geranylgeranyl)-sn-glycerol (CDP-archaeol) from 2,3-bis-(O-geranylgeranyl)-sn-glycerol 1-phosphate (DGGGP) and CTP. This reaction is the third ether-bond-formation step in the biosynthesis of archaeal membrane lipids.</text>
</comment>
<comment type="catalytic activity">
    <reaction evidence="1">
        <text>2,3-bis-O-(geranylgeranyl)-sn-glycerol 1-phosphate + CTP + H(+) = CDP-2,3-bis-O-(geranylgeranyl)-sn-glycerol + diphosphate</text>
        <dbReference type="Rhea" id="RHEA:25690"/>
        <dbReference type="ChEBI" id="CHEBI:15378"/>
        <dbReference type="ChEBI" id="CHEBI:33019"/>
        <dbReference type="ChEBI" id="CHEBI:37563"/>
        <dbReference type="ChEBI" id="CHEBI:58837"/>
        <dbReference type="ChEBI" id="CHEBI:58838"/>
        <dbReference type="EC" id="2.7.7.67"/>
    </reaction>
</comment>
<comment type="cofactor">
    <cofactor evidence="1">
        <name>Mg(2+)</name>
        <dbReference type="ChEBI" id="CHEBI:18420"/>
    </cofactor>
</comment>
<comment type="pathway">
    <text evidence="1">Membrane lipid metabolism; glycerophospholipid metabolism.</text>
</comment>
<comment type="subcellular location">
    <subcellularLocation>
        <location evidence="1">Cell membrane</location>
        <topology evidence="1">Multi-pass membrane protein</topology>
    </subcellularLocation>
</comment>
<comment type="similarity">
    <text evidence="1">Belongs to the CDP-archaeol synthase family.</text>
</comment>
<comment type="sequence caution" evidence="2">
    <conflict type="erroneous initiation">
        <sequence resource="EMBL-CDS" id="CAB50526"/>
    </conflict>
    <text>Extended N-terminus.</text>
</comment>
<protein>
    <recommendedName>
        <fullName evidence="1">CDP-archaeol synthase</fullName>
        <ecNumber evidence="1">2.7.7.67</ecNumber>
    </recommendedName>
    <alternativeName>
        <fullName evidence="1">CDP-2,3-bis-(O-geranylgeranyl)-sn-glycerol synthase</fullName>
    </alternativeName>
</protein>
<reference key="1">
    <citation type="journal article" date="2003" name="Mol. Microbiol.">
        <title>An integrated analysis of the genome of the hyperthermophilic archaeon Pyrococcus abyssi.</title>
        <authorList>
            <person name="Cohen G.N."/>
            <person name="Barbe V."/>
            <person name="Flament D."/>
            <person name="Galperin M."/>
            <person name="Heilig R."/>
            <person name="Lecompte O."/>
            <person name="Poch O."/>
            <person name="Prieur D."/>
            <person name="Querellou J."/>
            <person name="Ripp R."/>
            <person name="Thierry J.-C."/>
            <person name="Van der Oost J."/>
            <person name="Weissenbach J."/>
            <person name="Zivanovic Y."/>
            <person name="Forterre P."/>
        </authorList>
    </citation>
    <scope>NUCLEOTIDE SEQUENCE [LARGE SCALE GENOMIC DNA]</scope>
    <source>
        <strain>GE5 / Orsay</strain>
    </source>
</reference>
<reference key="2">
    <citation type="journal article" date="2012" name="Curr. Microbiol.">
        <title>Re-annotation of two hyperthermophilic archaea Pyrococcus abyssi GE5 and Pyrococcus furiosus DSM 3638.</title>
        <authorList>
            <person name="Gao J."/>
            <person name="Wang J."/>
        </authorList>
    </citation>
    <scope>GENOME REANNOTATION</scope>
    <source>
        <strain>GE5 / Orsay</strain>
    </source>
</reference>
<accession>Q9UY86</accession>
<accession>G8ZJX6</accession>